<protein>
    <recommendedName>
        <fullName>Esterase AGAP003155</fullName>
        <ecNumber evidence="3">3.1.2.-</ecNumber>
    </recommendedName>
</protein>
<comment type="similarity">
    <text evidence="3">Belongs to the LovG family.</text>
</comment>
<proteinExistence type="inferred from homology"/>
<reference key="1">
    <citation type="journal article" date="2002" name="Science">
        <title>The genome sequence of the malaria mosquito Anopheles gambiae.</title>
        <authorList>
            <person name="Holt R.A."/>
            <person name="Subramanian G.M."/>
            <person name="Halpern A."/>
            <person name="Sutton G.G."/>
            <person name="Charlab R."/>
            <person name="Nusskern D.R."/>
            <person name="Wincker P."/>
            <person name="Clark A.G."/>
            <person name="Ribeiro J.M.C."/>
            <person name="Wides R."/>
            <person name="Salzberg S.L."/>
            <person name="Loftus B.J."/>
            <person name="Yandell M.D."/>
            <person name="Majoros W.H."/>
            <person name="Rusch D.B."/>
            <person name="Lai Z."/>
            <person name="Kraft C.L."/>
            <person name="Abril J.F."/>
            <person name="Anthouard V."/>
            <person name="Arensburger P."/>
            <person name="Atkinson P.W."/>
            <person name="Baden H."/>
            <person name="de Berardinis V."/>
            <person name="Baldwin D."/>
            <person name="Benes V."/>
            <person name="Biedler J."/>
            <person name="Blass C."/>
            <person name="Bolanos R."/>
            <person name="Boscus D."/>
            <person name="Barnstead M."/>
            <person name="Cai S."/>
            <person name="Center A."/>
            <person name="Chaturverdi K."/>
            <person name="Christophides G.K."/>
            <person name="Chrystal M.A.M."/>
            <person name="Clamp M."/>
            <person name="Cravchik A."/>
            <person name="Curwen V."/>
            <person name="Dana A."/>
            <person name="Delcher A."/>
            <person name="Dew I."/>
            <person name="Evans C.A."/>
            <person name="Flanigan M."/>
            <person name="Grundschober-Freimoser A."/>
            <person name="Friedli L."/>
            <person name="Gu Z."/>
            <person name="Guan P."/>
            <person name="Guigo R."/>
            <person name="Hillenmeyer M.E."/>
            <person name="Hladun S.L."/>
            <person name="Hogan J.R."/>
            <person name="Hong Y.S."/>
            <person name="Hoover J."/>
            <person name="Jaillon O."/>
            <person name="Ke Z."/>
            <person name="Kodira C.D."/>
            <person name="Kokoza E."/>
            <person name="Koutsos A."/>
            <person name="Letunic I."/>
            <person name="Levitsky A.A."/>
            <person name="Liang Y."/>
            <person name="Lin J.-J."/>
            <person name="Lobo N.F."/>
            <person name="Lopez J.R."/>
            <person name="Malek J.A."/>
            <person name="McIntosh T.C."/>
            <person name="Meister S."/>
            <person name="Miller J.R."/>
            <person name="Mobarry C."/>
            <person name="Mongin E."/>
            <person name="Murphy S.D."/>
            <person name="O'Brochta D.A."/>
            <person name="Pfannkoch C."/>
            <person name="Qi R."/>
            <person name="Regier M.A."/>
            <person name="Remington K."/>
            <person name="Shao H."/>
            <person name="Sharakhova M.V."/>
            <person name="Sitter C.D."/>
            <person name="Shetty J."/>
            <person name="Smith T.J."/>
            <person name="Strong R."/>
            <person name="Sun J."/>
            <person name="Thomasova D."/>
            <person name="Ton L.Q."/>
            <person name="Topalis P."/>
            <person name="Tu Z.J."/>
            <person name="Unger M.F."/>
            <person name="Walenz B."/>
            <person name="Wang A.H."/>
            <person name="Wang J."/>
            <person name="Wang M."/>
            <person name="Wang X."/>
            <person name="Woodford K.J."/>
            <person name="Wortman J.R."/>
            <person name="Wu M."/>
            <person name="Yao A."/>
            <person name="Zdobnov E.M."/>
            <person name="Zhang H."/>
            <person name="Zhao Q."/>
            <person name="Zhao S."/>
            <person name="Zhu S.C."/>
            <person name="Zhimulev I."/>
            <person name="Coluzzi M."/>
            <person name="della Torre A."/>
            <person name="Roth C.W."/>
            <person name="Louis C."/>
            <person name="Kalush F."/>
            <person name="Mural R.J."/>
            <person name="Myers E.W."/>
            <person name="Adams M.D."/>
            <person name="Smith H.O."/>
            <person name="Broder S."/>
            <person name="Gardner M.J."/>
            <person name="Fraser C.M."/>
            <person name="Birney E."/>
            <person name="Bork P."/>
            <person name="Brey P.T."/>
            <person name="Venter J.C."/>
            <person name="Weissenbach J."/>
            <person name="Kafatos F.C."/>
            <person name="Collins F.H."/>
            <person name="Hoffman S.L."/>
        </authorList>
    </citation>
    <scope>NUCLEOTIDE SEQUENCE [LARGE SCALE GENOMIC DNA]</scope>
    <source>
        <strain>PEST</strain>
    </source>
</reference>
<evidence type="ECO:0000250" key="1">
    <source>
        <dbReference type="UniProtKB" id="P38777"/>
    </source>
</evidence>
<evidence type="ECO:0000256" key="2">
    <source>
        <dbReference type="SAM" id="MobiDB-lite"/>
    </source>
</evidence>
<evidence type="ECO:0000305" key="3"/>
<dbReference type="EC" id="3.1.2.-" evidence="3"/>
<dbReference type="EMBL" id="AAAB01008879">
    <property type="protein sequence ID" value="EAA08462.5"/>
    <property type="molecule type" value="Genomic_DNA"/>
</dbReference>
<dbReference type="RefSeq" id="XP_312845.5">
    <property type="nucleotide sequence ID" value="XM_312845.5"/>
</dbReference>
<dbReference type="SMR" id="Q7QBJ0"/>
<dbReference type="FunCoup" id="Q7QBJ0">
    <property type="interactions" value="1296"/>
</dbReference>
<dbReference type="STRING" id="7165.Q7QBJ0"/>
<dbReference type="ESTHER" id="anoga-q7qbj0">
    <property type="family name" value="FSH1"/>
</dbReference>
<dbReference type="PaxDb" id="7165-AGAP003155-PA"/>
<dbReference type="EnsemblMetazoa" id="AGAP003155-RA">
    <property type="protein sequence ID" value="AGAP003155-PA"/>
    <property type="gene ID" value="AGAP003155"/>
</dbReference>
<dbReference type="GeneID" id="1273826"/>
<dbReference type="KEGG" id="aga:1273826"/>
<dbReference type="VEuPathDB" id="VectorBase:AGAMI1_000962"/>
<dbReference type="VEuPathDB" id="VectorBase:AGAP003155"/>
<dbReference type="eggNOG" id="KOG2551">
    <property type="taxonomic scope" value="Eukaryota"/>
</dbReference>
<dbReference type="HOGENOM" id="CLU_051938_2_3_1"/>
<dbReference type="InParanoid" id="Q7QBJ0"/>
<dbReference type="OMA" id="EEPRGWW"/>
<dbReference type="PhylomeDB" id="Q7QBJ0"/>
<dbReference type="Proteomes" id="UP000007062">
    <property type="component" value="Chromosome 2R"/>
</dbReference>
<dbReference type="GO" id="GO:0005737">
    <property type="term" value="C:cytoplasm"/>
    <property type="evidence" value="ECO:0000318"/>
    <property type="project" value="GO_Central"/>
</dbReference>
<dbReference type="GO" id="GO:0005634">
    <property type="term" value="C:nucleus"/>
    <property type="evidence" value="ECO:0000318"/>
    <property type="project" value="GO_Central"/>
</dbReference>
<dbReference type="GO" id="GO:0016787">
    <property type="term" value="F:hydrolase activity"/>
    <property type="evidence" value="ECO:0000318"/>
    <property type="project" value="GO_Central"/>
</dbReference>
<dbReference type="FunFam" id="3.40.50.1820:FF:000073">
    <property type="entry name" value="esterase OVCA2 isoform X6"/>
    <property type="match status" value="1"/>
</dbReference>
<dbReference type="Gene3D" id="3.40.50.1820">
    <property type="entry name" value="alpha/beta hydrolase"/>
    <property type="match status" value="1"/>
</dbReference>
<dbReference type="InterPro" id="IPR029058">
    <property type="entry name" value="AB_hydrolase_fold"/>
</dbReference>
<dbReference type="InterPro" id="IPR005645">
    <property type="entry name" value="FSH-like_dom"/>
</dbReference>
<dbReference type="InterPro" id="IPR050593">
    <property type="entry name" value="LovG"/>
</dbReference>
<dbReference type="PANTHER" id="PTHR48070">
    <property type="entry name" value="ESTERASE OVCA2"/>
    <property type="match status" value="1"/>
</dbReference>
<dbReference type="PANTHER" id="PTHR48070:SF6">
    <property type="entry name" value="ESTERASE OVCA2"/>
    <property type="match status" value="1"/>
</dbReference>
<dbReference type="Pfam" id="PF03959">
    <property type="entry name" value="FSH1"/>
    <property type="match status" value="1"/>
</dbReference>
<dbReference type="SUPFAM" id="SSF53474">
    <property type="entry name" value="alpha/beta-Hydrolases"/>
    <property type="match status" value="1"/>
</dbReference>
<accession>Q7QBJ0</accession>
<keyword id="KW-0378">Hydrolase</keyword>
<keyword id="KW-1185">Reference proteome</keyword>
<name>LOVG_ANOGA</name>
<organism>
    <name type="scientific">Anopheles gambiae</name>
    <name type="common">African malaria mosquito</name>
    <dbReference type="NCBI Taxonomy" id="7165"/>
    <lineage>
        <taxon>Eukaryota</taxon>
        <taxon>Metazoa</taxon>
        <taxon>Ecdysozoa</taxon>
        <taxon>Arthropoda</taxon>
        <taxon>Hexapoda</taxon>
        <taxon>Insecta</taxon>
        <taxon>Pterygota</taxon>
        <taxon>Neoptera</taxon>
        <taxon>Endopterygota</taxon>
        <taxon>Diptera</taxon>
        <taxon>Nematocera</taxon>
        <taxon>Culicoidea</taxon>
        <taxon>Culicidae</taxon>
        <taxon>Anophelinae</taxon>
        <taxon>Anopheles</taxon>
    </lineage>
</organism>
<gene>
    <name type="ORF">AGAP003155</name>
</gene>
<feature type="chain" id="PRO_0000300885" description="Esterase AGAP003155">
    <location>
        <begin position="1"/>
        <end position="266"/>
    </location>
</feature>
<feature type="region of interest" description="Disordered" evidence="2">
    <location>
        <begin position="231"/>
        <end position="266"/>
    </location>
</feature>
<feature type="active site" description="Charge relay system" evidence="1">
    <location>
        <position position="114"/>
    </location>
</feature>
<feature type="active site" description="Charge relay system" evidence="1">
    <location>
        <position position="172"/>
    </location>
</feature>
<feature type="active site" description="Charge relay system" evidence="1">
    <location>
        <position position="199"/>
    </location>
</feature>
<sequence length="266" mass="29496">MSKVSGAGEEKLKVLALHGYRQNADSFKSKLGSFRKMLNKYVEFVFVSAPHPAAPLEAVGGEPDPNQRSWWFNKDDRTFKGTNQGGPAYGFDESLRLVERTWQAEGCHGLLGFSQGACFVGLLCDLSARGMTTMKPQFAVVASGFRSGSLVHLNYYENKVQIPSLHIFGETDEIITKDMSEALAETFLDPEVVTHPGGHYFPAQASLKETYVDFFRDQLQQHLEAKELQNATEENSFHLEGQEEAEESALQPVHEGLQNGSDSDSD</sequence>